<comment type="function">
    <text>Ferredoxins are iron-sulfur proteins that transfer electrons in a wide variety of metabolic reactions.</text>
</comment>
<comment type="cofactor">
    <cofactor>
        <name>[2Fe-2S] cluster</name>
        <dbReference type="ChEBI" id="CHEBI:190135"/>
    </cofactor>
    <text>Binds 1 [2Fe-2S] cluster.</text>
</comment>
<comment type="subunit">
    <text evidence="1">Forms a complex with heterodimeric ferredoxin-thioredoxin reductase (FTR) and thioredoxin.</text>
</comment>
<comment type="subcellular location">
    <subcellularLocation>
        <location>Plastid</location>
        <location>Chloroplast</location>
    </subcellularLocation>
</comment>
<comment type="similarity">
    <text evidence="3">Belongs to the 2Fe2S plant-type ferredoxin family.</text>
</comment>
<name>FER_PYRYE</name>
<organism>
    <name type="scientific">Pyropia yezoensis</name>
    <name type="common">Susabi-nori</name>
    <name type="synonym">Porphyra yezoensis</name>
    <dbReference type="NCBI Taxonomy" id="2788"/>
    <lineage>
        <taxon>Eukaryota</taxon>
        <taxon>Rhodophyta</taxon>
        <taxon>Bangiophyceae</taxon>
        <taxon>Bangiales</taxon>
        <taxon>Bangiaceae</taxon>
        <taxon>Pyropia</taxon>
    </lineage>
</organism>
<gene>
    <name type="primary">petF</name>
</gene>
<protein>
    <recommendedName>
        <fullName>Ferredoxin</fullName>
    </recommendedName>
</protein>
<geneLocation type="chloroplast"/>
<sequence length="99" mass="10801">MADYKIHLLCEEEGIDVTFNCAEDTYILDAAEEEGIELPYSCRAGACSTCAGKVTEGTVDQADQSFLDDDQLLAGYVLTCIAYPSSDCTISTHVEQELY</sequence>
<feature type="initiator methionine" description="Removed" evidence="1">
    <location>
        <position position="1"/>
    </location>
</feature>
<feature type="chain" id="PRO_0000277285" description="Ferredoxin">
    <location>
        <begin position="2"/>
        <end position="99"/>
    </location>
</feature>
<feature type="domain" description="2Fe-2S ferredoxin-type" evidence="2">
    <location>
        <begin position="4"/>
        <end position="96"/>
    </location>
</feature>
<feature type="binding site" evidence="2">
    <location>
        <position position="42"/>
    </location>
    <ligand>
        <name>[2Fe-2S] cluster</name>
        <dbReference type="ChEBI" id="CHEBI:190135"/>
    </ligand>
</feature>
<feature type="binding site" evidence="2">
    <location>
        <position position="47"/>
    </location>
    <ligand>
        <name>[2Fe-2S] cluster</name>
        <dbReference type="ChEBI" id="CHEBI:190135"/>
    </ligand>
</feature>
<feature type="binding site" evidence="2">
    <location>
        <position position="50"/>
    </location>
    <ligand>
        <name>[2Fe-2S] cluster</name>
        <dbReference type="ChEBI" id="CHEBI:190135"/>
    </ligand>
</feature>
<feature type="binding site" evidence="2">
    <location>
        <position position="80"/>
    </location>
    <ligand>
        <name>[2Fe-2S] cluster</name>
        <dbReference type="ChEBI" id="CHEBI:190135"/>
    </ligand>
</feature>
<evidence type="ECO:0000250" key="1"/>
<evidence type="ECO:0000255" key="2">
    <source>
        <dbReference type="PROSITE-ProRule" id="PRU00465"/>
    </source>
</evidence>
<evidence type="ECO:0000305" key="3"/>
<keyword id="KW-0001">2Fe-2S</keyword>
<keyword id="KW-0150">Chloroplast</keyword>
<keyword id="KW-0249">Electron transport</keyword>
<keyword id="KW-0408">Iron</keyword>
<keyword id="KW-0411">Iron-sulfur</keyword>
<keyword id="KW-0479">Metal-binding</keyword>
<keyword id="KW-0934">Plastid</keyword>
<keyword id="KW-0813">Transport</keyword>
<dbReference type="EMBL" id="AP006715">
    <property type="protein sequence ID" value="BAE92444.1"/>
    <property type="molecule type" value="Genomic_DNA"/>
</dbReference>
<dbReference type="RefSeq" id="YP_537001.1">
    <property type="nucleotide sequence ID" value="NC_007932.1"/>
</dbReference>
<dbReference type="SMR" id="Q1XDG7"/>
<dbReference type="GeneID" id="3978941"/>
<dbReference type="GO" id="GO:0009507">
    <property type="term" value="C:chloroplast"/>
    <property type="evidence" value="ECO:0007669"/>
    <property type="project" value="UniProtKB-SubCell"/>
</dbReference>
<dbReference type="GO" id="GO:0051537">
    <property type="term" value="F:2 iron, 2 sulfur cluster binding"/>
    <property type="evidence" value="ECO:0007669"/>
    <property type="project" value="UniProtKB-KW"/>
</dbReference>
<dbReference type="GO" id="GO:0009055">
    <property type="term" value="F:electron transfer activity"/>
    <property type="evidence" value="ECO:0007669"/>
    <property type="project" value="InterPro"/>
</dbReference>
<dbReference type="GO" id="GO:0046872">
    <property type="term" value="F:metal ion binding"/>
    <property type="evidence" value="ECO:0007669"/>
    <property type="project" value="UniProtKB-KW"/>
</dbReference>
<dbReference type="GO" id="GO:0022900">
    <property type="term" value="P:electron transport chain"/>
    <property type="evidence" value="ECO:0007669"/>
    <property type="project" value="InterPro"/>
</dbReference>
<dbReference type="CDD" id="cd00207">
    <property type="entry name" value="fer2"/>
    <property type="match status" value="1"/>
</dbReference>
<dbReference type="FunFam" id="3.10.20.30:FF:000014">
    <property type="entry name" value="Ferredoxin"/>
    <property type="match status" value="1"/>
</dbReference>
<dbReference type="Gene3D" id="3.10.20.30">
    <property type="match status" value="1"/>
</dbReference>
<dbReference type="InterPro" id="IPR036010">
    <property type="entry name" value="2Fe-2S_ferredoxin-like_sf"/>
</dbReference>
<dbReference type="InterPro" id="IPR001041">
    <property type="entry name" value="2Fe-2S_ferredoxin-type"/>
</dbReference>
<dbReference type="InterPro" id="IPR006058">
    <property type="entry name" value="2Fe2S_fd_BS"/>
</dbReference>
<dbReference type="InterPro" id="IPR012675">
    <property type="entry name" value="Beta-grasp_dom_sf"/>
</dbReference>
<dbReference type="InterPro" id="IPR010241">
    <property type="entry name" value="Fd_pln"/>
</dbReference>
<dbReference type="NCBIfam" id="TIGR02008">
    <property type="entry name" value="fdx_plant"/>
    <property type="match status" value="1"/>
</dbReference>
<dbReference type="PANTHER" id="PTHR43112">
    <property type="entry name" value="FERREDOXIN"/>
    <property type="match status" value="1"/>
</dbReference>
<dbReference type="PANTHER" id="PTHR43112:SF3">
    <property type="entry name" value="FERREDOXIN-2, CHLOROPLASTIC"/>
    <property type="match status" value="1"/>
</dbReference>
<dbReference type="Pfam" id="PF00111">
    <property type="entry name" value="Fer2"/>
    <property type="match status" value="1"/>
</dbReference>
<dbReference type="SUPFAM" id="SSF54292">
    <property type="entry name" value="2Fe-2S ferredoxin-like"/>
    <property type="match status" value="1"/>
</dbReference>
<dbReference type="PROSITE" id="PS00197">
    <property type="entry name" value="2FE2S_FER_1"/>
    <property type="match status" value="1"/>
</dbReference>
<dbReference type="PROSITE" id="PS51085">
    <property type="entry name" value="2FE2S_FER_2"/>
    <property type="match status" value="1"/>
</dbReference>
<proteinExistence type="inferred from homology"/>
<reference key="1">
    <citation type="submission" date="2003-11" db="EMBL/GenBank/DDBJ databases">
        <title>Whole genome sequence of Porphyra yezoensis chloroplast.</title>
        <authorList>
            <person name="Kunimoto M."/>
            <person name="Morishima K."/>
            <person name="Yoshikawa M."/>
            <person name="Fukuda S."/>
            <person name="Kobayashi T."/>
            <person name="Kobayashi M."/>
            <person name="Okazaki T."/>
            <person name="Ohara I."/>
            <person name="Nakayama I."/>
        </authorList>
    </citation>
    <scope>NUCLEOTIDE SEQUENCE [LARGE SCALE GENOMIC DNA]</scope>
    <source>
        <strain>U-51</strain>
    </source>
</reference>
<accession>Q1XDG7</accession>